<sequence>MATASFNMQSVFAAPSGVLTTRNIRNTNQLFFKRIAPVGVRCMAQGDPIKEDPSVPSTSTSATPPQMPQSPPPPVSKPKVSTKFGDLLAFSGPAPERINGRLAMVGFVAAIAMELSKGENVFAQISDGGVGWFLGTTALLTLASMVPLFKGIRAEAKSKGFMTSDAELWNGRFAMLGLVALAFTEYVTGGTLV</sequence>
<gene>
    <name evidence="14" type="primary">ELIP2</name>
    <name evidence="16" type="ordered locus">At4g14690</name>
    <name evidence="17" type="ORF">dl3385w</name>
    <name evidence="18" type="ORF">FCAALL.232</name>
</gene>
<evidence type="ECO:0000250" key="1"/>
<evidence type="ECO:0000255" key="2"/>
<evidence type="ECO:0000256" key="3">
    <source>
        <dbReference type="SAM" id="MobiDB-lite"/>
    </source>
</evidence>
<evidence type="ECO:0000269" key="4">
    <source>
    </source>
</evidence>
<evidence type="ECO:0000269" key="5">
    <source>
    </source>
</evidence>
<evidence type="ECO:0000269" key="6">
    <source>
    </source>
</evidence>
<evidence type="ECO:0000269" key="7">
    <source>
    </source>
</evidence>
<evidence type="ECO:0000269" key="8">
    <source>
    </source>
</evidence>
<evidence type="ECO:0000269" key="9">
    <source>
    </source>
</evidence>
<evidence type="ECO:0000269" key="10">
    <source>
    </source>
</evidence>
<evidence type="ECO:0000269" key="11">
    <source>
    </source>
</evidence>
<evidence type="ECO:0000269" key="12">
    <source>
    </source>
</evidence>
<evidence type="ECO:0000269" key="13">
    <source>
    </source>
</evidence>
<evidence type="ECO:0000303" key="14">
    <source>
    </source>
</evidence>
<evidence type="ECO:0000305" key="15"/>
<evidence type="ECO:0000312" key="16">
    <source>
        <dbReference type="Araport" id="AT4G14690"/>
    </source>
</evidence>
<evidence type="ECO:0000312" key="17">
    <source>
        <dbReference type="EMBL" id="CAB10248.1"/>
    </source>
</evidence>
<evidence type="ECO:0000312" key="18">
    <source>
        <dbReference type="EMBL" id="CAB78511.1"/>
    </source>
</evidence>
<feature type="transit peptide" description="Chloroplast" evidence="2">
    <location>
        <begin position="1"/>
        <end position="43"/>
    </location>
</feature>
<feature type="chain" id="PRO_0000422365" description="Early light-induced protein 2, chloroplastic">
    <location>
        <begin position="44"/>
        <end position="193"/>
    </location>
</feature>
<feature type="transmembrane region" description="Helical" evidence="2">
    <location>
        <begin position="102"/>
        <end position="122"/>
    </location>
</feature>
<feature type="transmembrane region" description="Helical" evidence="2">
    <location>
        <begin position="129"/>
        <end position="149"/>
    </location>
</feature>
<feature type="transmembrane region" description="Helical" evidence="2">
    <location>
        <begin position="173"/>
        <end position="193"/>
    </location>
</feature>
<feature type="region of interest" description="Disordered" evidence="3">
    <location>
        <begin position="46"/>
        <end position="80"/>
    </location>
</feature>
<feature type="compositionally biased region" description="Low complexity" evidence="3">
    <location>
        <begin position="54"/>
        <end position="64"/>
    </location>
</feature>
<feature type="compositionally biased region" description="Pro residues" evidence="3">
    <location>
        <begin position="65"/>
        <end position="76"/>
    </location>
</feature>
<feature type="sequence conflict" description="In Ref. 5; AAM67121." evidence="15" ref="5">
    <original>I</original>
    <variation>N</variation>
    <location>
        <position position="35"/>
    </location>
</feature>
<feature type="sequence conflict" description="In Ref. 5; AAM67121." evidence="15" ref="5">
    <original>P</original>
    <variation>Q</variation>
    <location>
        <position position="64"/>
    </location>
</feature>
<feature type="sequence conflict" description="In Ref. 5; AAM67121." evidence="15" ref="5">
    <original>M</original>
    <variation>V</variation>
    <location>
        <position position="113"/>
    </location>
</feature>
<feature type="sequence conflict" description="In Ref. 7; CAA81320." evidence="15" ref="7">
    <original>V</original>
    <variation>VLN</variation>
    <location>
        <position position="193"/>
    </location>
</feature>
<name>ELIP2_ARATH</name>
<comment type="function">
    <text evidence="7 8 9 11 12">Probably involved in the integration of pigments into the mature light-harvesting pigment-protein complexes. Light-harvesting chlorophyll (LHC) a/b-binding protein required to ensure a high rate of chlorophyll accumulation during deetiolation in continuous high light. Involved in seed germination. May fulfill a photoprotective functions. Prevents excess accumulation of free chlorophyll by inhibiting the entire chlorophyll biosynthesis pathway (e.g. 5-aminolevulinate synthesis and Mg-protoporphyrin IX chelatase activity), and hence prevent photooxidative stress.</text>
</comment>
<comment type="subcellular location">
    <subcellularLocation>
        <location evidence="4 10">Plastid</location>
        <location evidence="4 10">Chloroplast thylakoid membrane</location>
        <topology evidence="2">Multi-pass membrane protein</topology>
    </subcellularLocation>
    <text evidence="1">Associated with both photosystems I and II (By similarity). Coisolates equally with monomeric (mLhcb) and trimeric (tLhcb) populations of the major LHC from photosystem II (PSII) in response to 2 hours light stress.</text>
</comment>
<comment type="developmental stage">
    <text evidence="8">Appears transiently during greening of etiolated seedlings and disappears before chloroplast development is completed.</text>
</comment>
<comment type="induction">
    <text evidence="4 5 6 7 8 10 13">By high-intensity light, mostly at cold temperature (e.g. 4 degrees Celsius) (at protein level). This high-light-mediated accumulation is inhibited by okadaic acid. A stepwise accumulation is induced when 40 percents of PSII reaction centers become photodamaged. Induced by UV-A, red, far-red and blue lights illumination in a phytochrome A and phytochrome B-dependent manner. The COP9 signalosome is involved in dark-mediated repression. Accumulates upon heat shock but repressed at continuous high temperatures. Transcript levels follow a circadian cycle, with highest levels 2 hours after light, without protein accumulation. In light stress-preadapted or senescent leaves exposed to light stress there is a lack of correlation between transcript and protein accumulation; transcripts accumulate in yellow leaves exposed to high light, but not proteins. Transiently up-regulated during deetiolation (PubMed:31604812).</text>
</comment>
<comment type="disruption phenotype">
    <text evidence="8 9 12">Reduced greening during deetiolation in continuous high light, with a reduced ratio between chlorophylls a and especially at the highest irradiances. Slight reduction in the rate of chlorophyll accumulation during greening at moderate light intensities, and lower zeaxanthin accumulation in high light conditions. Normal sensitivity to photoinhibition and photooxidation. Impaired seed germination, especially at hot temperatures (30 degrees Celsius).</text>
</comment>
<comment type="similarity">
    <text evidence="15">Belongs to the ELIP/psbS family.</text>
</comment>
<comment type="sequence caution" evidence="15">
    <conflict type="erroneous initiation">
        <sequence resource="EMBL-CDS" id="AAD28779"/>
    </conflict>
    <text>Truncated N-terminus.</text>
</comment>
<comment type="sequence caution" evidence="15">
    <conflict type="erroneous gene model prediction">
        <sequence resource="EMBL-CDS" id="CAB10248"/>
    </conflict>
</comment>
<comment type="sequence caution" evidence="15">
    <conflict type="erroneous gene model prediction">
        <sequence resource="EMBL-CDS" id="CAB78511"/>
    </conflict>
</comment>
<protein>
    <recommendedName>
        <fullName evidence="14">Early light-induced protein 2, chloroplastic</fullName>
    </recommendedName>
</protein>
<organism>
    <name type="scientific">Arabidopsis thaliana</name>
    <name type="common">Mouse-ear cress</name>
    <dbReference type="NCBI Taxonomy" id="3702"/>
    <lineage>
        <taxon>Eukaryota</taxon>
        <taxon>Viridiplantae</taxon>
        <taxon>Streptophyta</taxon>
        <taxon>Embryophyta</taxon>
        <taxon>Tracheophyta</taxon>
        <taxon>Spermatophyta</taxon>
        <taxon>Magnoliopsida</taxon>
        <taxon>eudicotyledons</taxon>
        <taxon>Gunneridae</taxon>
        <taxon>Pentapetalae</taxon>
        <taxon>rosids</taxon>
        <taxon>malvids</taxon>
        <taxon>Brassicales</taxon>
        <taxon>Brassicaceae</taxon>
        <taxon>Camelineae</taxon>
        <taxon>Arabidopsis</taxon>
    </lineage>
</organism>
<proteinExistence type="evidence at protein level"/>
<dbReference type="EMBL" id="Z97336">
    <property type="protein sequence ID" value="CAB10248.1"/>
    <property type="status" value="ALT_SEQ"/>
    <property type="molecule type" value="Genomic_DNA"/>
</dbReference>
<dbReference type="EMBL" id="AL161539">
    <property type="protein sequence ID" value="CAB78511.1"/>
    <property type="status" value="ALT_SEQ"/>
    <property type="molecule type" value="Genomic_DNA"/>
</dbReference>
<dbReference type="EMBL" id="CP002687">
    <property type="protein sequence ID" value="AEE83475.1"/>
    <property type="molecule type" value="Genomic_DNA"/>
</dbReference>
<dbReference type="EMBL" id="AF370266">
    <property type="protein sequence ID" value="AAK44081.1"/>
    <property type="molecule type" value="mRNA"/>
</dbReference>
<dbReference type="EMBL" id="AY063083">
    <property type="protein sequence ID" value="AAL34257.1"/>
    <property type="molecule type" value="mRNA"/>
</dbReference>
<dbReference type="EMBL" id="AY088811">
    <property type="protein sequence ID" value="AAM67121.1"/>
    <property type="molecule type" value="mRNA"/>
</dbReference>
<dbReference type="EMBL" id="AF134132">
    <property type="protein sequence ID" value="AAD28779.1"/>
    <property type="status" value="ALT_INIT"/>
    <property type="molecule type" value="mRNA"/>
</dbReference>
<dbReference type="EMBL" id="Z26549">
    <property type="protein sequence ID" value="CAA81320.1"/>
    <property type="molecule type" value="mRNA"/>
</dbReference>
<dbReference type="PIR" id="F71409">
    <property type="entry name" value="F71409"/>
</dbReference>
<dbReference type="PIR" id="T52309">
    <property type="entry name" value="T52309"/>
</dbReference>
<dbReference type="RefSeq" id="NP_567438.1">
    <property type="nucleotide sequence ID" value="NM_117551.3"/>
</dbReference>
<dbReference type="SMR" id="Q94K66"/>
<dbReference type="BioGRID" id="12416">
    <property type="interactions" value="23"/>
</dbReference>
<dbReference type="FunCoup" id="Q94K66">
    <property type="interactions" value="15"/>
</dbReference>
<dbReference type="IntAct" id="Q94K66">
    <property type="interactions" value="23"/>
</dbReference>
<dbReference type="STRING" id="3702.Q94K66"/>
<dbReference type="GlyGen" id="Q94K66">
    <property type="glycosylation" value="1 site"/>
</dbReference>
<dbReference type="PaxDb" id="3702-AT4G14690.1"/>
<dbReference type="ProteomicsDB" id="221940"/>
<dbReference type="EnsemblPlants" id="AT4G14690.1">
    <property type="protein sequence ID" value="AT4G14690.1"/>
    <property type="gene ID" value="AT4G14690"/>
</dbReference>
<dbReference type="GeneID" id="827119"/>
<dbReference type="Gramene" id="AT4G14690.1">
    <property type="protein sequence ID" value="AT4G14690.1"/>
    <property type="gene ID" value="AT4G14690"/>
</dbReference>
<dbReference type="KEGG" id="ath:AT4G14690"/>
<dbReference type="Araport" id="AT4G14690"/>
<dbReference type="TAIR" id="AT4G14690">
    <property type="gene designation" value="ELIP2"/>
</dbReference>
<dbReference type="eggNOG" id="ENOG502RZBJ">
    <property type="taxonomic scope" value="Eukaryota"/>
</dbReference>
<dbReference type="HOGENOM" id="CLU_099630_0_0_1"/>
<dbReference type="InParanoid" id="Q94K66"/>
<dbReference type="OMA" id="SRNMRNT"/>
<dbReference type="PhylomeDB" id="Q94K66"/>
<dbReference type="PRO" id="PR:Q94K66"/>
<dbReference type="Proteomes" id="UP000006548">
    <property type="component" value="Chromosome 4"/>
</dbReference>
<dbReference type="ExpressionAtlas" id="Q94K66">
    <property type="expression patterns" value="baseline and differential"/>
</dbReference>
<dbReference type="GO" id="GO:0009535">
    <property type="term" value="C:chloroplast thylakoid membrane"/>
    <property type="evidence" value="ECO:0000314"/>
    <property type="project" value="UniProtKB"/>
</dbReference>
<dbReference type="GO" id="GO:0009522">
    <property type="term" value="C:photosystem I"/>
    <property type="evidence" value="ECO:0007669"/>
    <property type="project" value="UniProtKB-KW"/>
</dbReference>
<dbReference type="GO" id="GO:0009523">
    <property type="term" value="C:photosystem II"/>
    <property type="evidence" value="ECO:0007669"/>
    <property type="project" value="UniProtKB-KW"/>
</dbReference>
<dbReference type="GO" id="GO:0071483">
    <property type="term" value="P:cellular response to blue light"/>
    <property type="evidence" value="ECO:0000270"/>
    <property type="project" value="UniProtKB"/>
</dbReference>
<dbReference type="GO" id="GO:0071490">
    <property type="term" value="P:cellular response to far red light"/>
    <property type="evidence" value="ECO:0000270"/>
    <property type="project" value="UniProtKB"/>
</dbReference>
<dbReference type="GO" id="GO:0034605">
    <property type="term" value="P:cellular response to heat"/>
    <property type="evidence" value="ECO:0000270"/>
    <property type="project" value="UniProtKB"/>
</dbReference>
<dbReference type="GO" id="GO:0071486">
    <property type="term" value="P:cellular response to high light intensity"/>
    <property type="evidence" value="ECO:0000270"/>
    <property type="project" value="UniProtKB"/>
</dbReference>
<dbReference type="GO" id="GO:0071491">
    <property type="term" value="P:cellular response to red light"/>
    <property type="evidence" value="ECO:0000270"/>
    <property type="project" value="UniProtKB"/>
</dbReference>
<dbReference type="GO" id="GO:0071492">
    <property type="term" value="P:cellular response to UV-A"/>
    <property type="evidence" value="ECO:0000270"/>
    <property type="project" value="UniProtKB"/>
</dbReference>
<dbReference type="GO" id="GO:0010117">
    <property type="term" value="P:photoprotection"/>
    <property type="evidence" value="ECO:0000315"/>
    <property type="project" value="UniProtKB"/>
</dbReference>
<dbReference type="GO" id="GO:0015979">
    <property type="term" value="P:photosynthesis"/>
    <property type="evidence" value="ECO:0007669"/>
    <property type="project" value="UniProtKB-KW"/>
</dbReference>
<dbReference type="GO" id="GO:0010030">
    <property type="term" value="P:positive regulation of seed germination"/>
    <property type="evidence" value="ECO:0000315"/>
    <property type="project" value="UniProtKB"/>
</dbReference>
<dbReference type="GO" id="GO:0010380">
    <property type="term" value="P:regulation of chlorophyll biosynthetic process"/>
    <property type="evidence" value="ECO:0000315"/>
    <property type="project" value="TAIR"/>
</dbReference>
<dbReference type="GO" id="GO:0010218">
    <property type="term" value="P:response to far red light"/>
    <property type="evidence" value="ECO:0000270"/>
    <property type="project" value="TAIR"/>
</dbReference>
<dbReference type="GO" id="GO:0009416">
    <property type="term" value="P:response to light stimulus"/>
    <property type="evidence" value="ECO:0000270"/>
    <property type="project" value="UniProtKB"/>
</dbReference>
<dbReference type="GO" id="GO:0010114">
    <property type="term" value="P:response to red light"/>
    <property type="evidence" value="ECO:0000270"/>
    <property type="project" value="TAIR"/>
</dbReference>
<dbReference type="GO" id="GO:0010224">
    <property type="term" value="P:response to UV-B"/>
    <property type="evidence" value="ECO:0000270"/>
    <property type="project" value="TAIR"/>
</dbReference>
<dbReference type="InterPro" id="IPR022796">
    <property type="entry name" value="Chloroa_b-bind"/>
</dbReference>
<dbReference type="PANTHER" id="PTHR14154">
    <property type="entry name" value="UPF0041 BRAIN PROTEIN 44-RELATED"/>
    <property type="match status" value="1"/>
</dbReference>
<dbReference type="Pfam" id="PF00504">
    <property type="entry name" value="Chloroa_b-bind"/>
    <property type="match status" value="1"/>
</dbReference>
<dbReference type="SUPFAM" id="SSF103511">
    <property type="entry name" value="Chlorophyll a-b binding protein"/>
    <property type="match status" value="1"/>
</dbReference>
<accession>Q94K66</accession>
<accession>O23325</accession>
<accession>Q42127</accession>
<accession>Q8L8U1</accession>
<accession>Q9SYX0</accession>
<reference key="1">
    <citation type="journal article" date="1998" name="Nature">
        <title>Analysis of 1.9 Mb of contiguous sequence from chromosome 4 of Arabidopsis thaliana.</title>
        <authorList>
            <person name="Bevan M."/>
            <person name="Bancroft I."/>
            <person name="Bent E."/>
            <person name="Love K."/>
            <person name="Goodman H.M."/>
            <person name="Dean C."/>
            <person name="Bergkamp R."/>
            <person name="Dirkse W."/>
            <person name="van Staveren M."/>
            <person name="Stiekema W."/>
            <person name="Drost L."/>
            <person name="Ridley P."/>
            <person name="Hudson S.-A."/>
            <person name="Patel K."/>
            <person name="Murphy G."/>
            <person name="Piffanelli P."/>
            <person name="Wedler H."/>
            <person name="Wedler E."/>
            <person name="Wambutt R."/>
            <person name="Weitzenegger T."/>
            <person name="Pohl T."/>
            <person name="Terryn N."/>
            <person name="Gielen J."/>
            <person name="Villarroel R."/>
            <person name="De Clercq R."/>
            <person name="van Montagu M."/>
            <person name="Lecharny A."/>
            <person name="Aubourg S."/>
            <person name="Gy I."/>
            <person name="Kreis M."/>
            <person name="Lao N."/>
            <person name="Kavanagh T."/>
            <person name="Hempel S."/>
            <person name="Kotter P."/>
            <person name="Entian K.-D."/>
            <person name="Rieger M."/>
            <person name="Schaefer M."/>
            <person name="Funk B."/>
            <person name="Mueller-Auer S."/>
            <person name="Silvey M."/>
            <person name="James R."/>
            <person name="Monfort A."/>
            <person name="Pons A."/>
            <person name="Puigdomenech P."/>
            <person name="Douka A."/>
            <person name="Voukelatou E."/>
            <person name="Milioni D."/>
            <person name="Hatzopoulos P."/>
            <person name="Piravandi E."/>
            <person name="Obermaier B."/>
            <person name="Hilbert H."/>
            <person name="Duesterhoeft A."/>
            <person name="Moores T."/>
            <person name="Jones J.D.G."/>
            <person name="Eneva T."/>
            <person name="Palme K."/>
            <person name="Benes V."/>
            <person name="Rechmann S."/>
            <person name="Ansorge W."/>
            <person name="Cooke R."/>
            <person name="Berger C."/>
            <person name="Delseny M."/>
            <person name="Voet M."/>
            <person name="Volckaert G."/>
            <person name="Mewes H.-W."/>
            <person name="Klosterman S."/>
            <person name="Schueller C."/>
            <person name="Chalwatzis N."/>
        </authorList>
    </citation>
    <scope>NUCLEOTIDE SEQUENCE [LARGE SCALE GENOMIC DNA]</scope>
    <source>
        <strain>cv. Columbia</strain>
    </source>
</reference>
<reference key="2">
    <citation type="journal article" date="1999" name="Nature">
        <title>Sequence and analysis of chromosome 4 of the plant Arabidopsis thaliana.</title>
        <authorList>
            <person name="Mayer K.F.X."/>
            <person name="Schueller C."/>
            <person name="Wambutt R."/>
            <person name="Murphy G."/>
            <person name="Volckaert G."/>
            <person name="Pohl T."/>
            <person name="Duesterhoeft A."/>
            <person name="Stiekema W."/>
            <person name="Entian K.-D."/>
            <person name="Terryn N."/>
            <person name="Harris B."/>
            <person name="Ansorge W."/>
            <person name="Brandt P."/>
            <person name="Grivell L.A."/>
            <person name="Rieger M."/>
            <person name="Weichselgartner M."/>
            <person name="de Simone V."/>
            <person name="Obermaier B."/>
            <person name="Mache R."/>
            <person name="Mueller M."/>
            <person name="Kreis M."/>
            <person name="Delseny M."/>
            <person name="Puigdomenech P."/>
            <person name="Watson M."/>
            <person name="Schmidtheini T."/>
            <person name="Reichert B."/>
            <person name="Portetelle D."/>
            <person name="Perez-Alonso M."/>
            <person name="Boutry M."/>
            <person name="Bancroft I."/>
            <person name="Vos P."/>
            <person name="Hoheisel J."/>
            <person name="Zimmermann W."/>
            <person name="Wedler H."/>
            <person name="Ridley P."/>
            <person name="Langham S.-A."/>
            <person name="McCullagh B."/>
            <person name="Bilham L."/>
            <person name="Robben J."/>
            <person name="van der Schueren J."/>
            <person name="Grymonprez B."/>
            <person name="Chuang Y.-J."/>
            <person name="Vandenbussche F."/>
            <person name="Braeken M."/>
            <person name="Weltjens I."/>
            <person name="Voet M."/>
            <person name="Bastiaens I."/>
            <person name="Aert R."/>
            <person name="Defoor E."/>
            <person name="Weitzenegger T."/>
            <person name="Bothe G."/>
            <person name="Ramsperger U."/>
            <person name="Hilbert H."/>
            <person name="Braun M."/>
            <person name="Holzer E."/>
            <person name="Brandt A."/>
            <person name="Peters S."/>
            <person name="van Staveren M."/>
            <person name="Dirkse W."/>
            <person name="Mooijman P."/>
            <person name="Klein Lankhorst R."/>
            <person name="Rose M."/>
            <person name="Hauf J."/>
            <person name="Koetter P."/>
            <person name="Berneiser S."/>
            <person name="Hempel S."/>
            <person name="Feldpausch M."/>
            <person name="Lamberth S."/>
            <person name="Van den Daele H."/>
            <person name="De Keyser A."/>
            <person name="Buysshaert C."/>
            <person name="Gielen J."/>
            <person name="Villarroel R."/>
            <person name="De Clercq R."/>
            <person name="van Montagu M."/>
            <person name="Rogers J."/>
            <person name="Cronin A."/>
            <person name="Quail M.A."/>
            <person name="Bray-Allen S."/>
            <person name="Clark L."/>
            <person name="Doggett J."/>
            <person name="Hall S."/>
            <person name="Kay M."/>
            <person name="Lennard N."/>
            <person name="McLay K."/>
            <person name="Mayes R."/>
            <person name="Pettett A."/>
            <person name="Rajandream M.A."/>
            <person name="Lyne M."/>
            <person name="Benes V."/>
            <person name="Rechmann S."/>
            <person name="Borkova D."/>
            <person name="Bloecker H."/>
            <person name="Scharfe M."/>
            <person name="Grimm M."/>
            <person name="Loehnert T.-H."/>
            <person name="Dose S."/>
            <person name="de Haan M."/>
            <person name="Maarse A.C."/>
            <person name="Schaefer M."/>
            <person name="Mueller-Auer S."/>
            <person name="Gabel C."/>
            <person name="Fuchs M."/>
            <person name="Fartmann B."/>
            <person name="Granderath K."/>
            <person name="Dauner D."/>
            <person name="Herzl A."/>
            <person name="Neumann S."/>
            <person name="Argiriou A."/>
            <person name="Vitale D."/>
            <person name="Liguori R."/>
            <person name="Piravandi E."/>
            <person name="Massenet O."/>
            <person name="Quigley F."/>
            <person name="Clabauld G."/>
            <person name="Muendlein A."/>
            <person name="Felber R."/>
            <person name="Schnabl S."/>
            <person name="Hiller R."/>
            <person name="Schmidt W."/>
            <person name="Lecharny A."/>
            <person name="Aubourg S."/>
            <person name="Chefdor F."/>
            <person name="Cooke R."/>
            <person name="Berger C."/>
            <person name="Monfort A."/>
            <person name="Casacuberta E."/>
            <person name="Gibbons T."/>
            <person name="Weber N."/>
            <person name="Vandenbol M."/>
            <person name="Bargues M."/>
            <person name="Terol J."/>
            <person name="Torres A."/>
            <person name="Perez-Perez A."/>
            <person name="Purnelle B."/>
            <person name="Bent E."/>
            <person name="Johnson S."/>
            <person name="Tacon D."/>
            <person name="Jesse T."/>
            <person name="Heijnen L."/>
            <person name="Schwarz S."/>
            <person name="Scholler P."/>
            <person name="Heber S."/>
            <person name="Francs P."/>
            <person name="Bielke C."/>
            <person name="Frishman D."/>
            <person name="Haase D."/>
            <person name="Lemcke K."/>
            <person name="Mewes H.-W."/>
            <person name="Stocker S."/>
            <person name="Zaccaria P."/>
            <person name="Bevan M."/>
            <person name="Wilson R.K."/>
            <person name="de la Bastide M."/>
            <person name="Habermann K."/>
            <person name="Parnell L."/>
            <person name="Dedhia N."/>
            <person name="Gnoj L."/>
            <person name="Schutz K."/>
            <person name="Huang E."/>
            <person name="Spiegel L."/>
            <person name="Sekhon M."/>
            <person name="Murray J."/>
            <person name="Sheet P."/>
            <person name="Cordes M."/>
            <person name="Abu-Threideh J."/>
            <person name="Stoneking T."/>
            <person name="Kalicki J."/>
            <person name="Graves T."/>
            <person name="Harmon G."/>
            <person name="Edwards J."/>
            <person name="Latreille P."/>
            <person name="Courtney L."/>
            <person name="Cloud J."/>
            <person name="Abbott A."/>
            <person name="Scott K."/>
            <person name="Johnson D."/>
            <person name="Minx P."/>
            <person name="Bentley D."/>
            <person name="Fulton B."/>
            <person name="Miller N."/>
            <person name="Greco T."/>
            <person name="Kemp K."/>
            <person name="Kramer J."/>
            <person name="Fulton L."/>
            <person name="Mardis E."/>
            <person name="Dante M."/>
            <person name="Pepin K."/>
            <person name="Hillier L.W."/>
            <person name="Nelson J."/>
            <person name="Spieth J."/>
            <person name="Ryan E."/>
            <person name="Andrews S."/>
            <person name="Geisel C."/>
            <person name="Layman D."/>
            <person name="Du H."/>
            <person name="Ali J."/>
            <person name="Berghoff A."/>
            <person name="Jones K."/>
            <person name="Drone K."/>
            <person name="Cotton M."/>
            <person name="Joshu C."/>
            <person name="Antonoiu B."/>
            <person name="Zidanic M."/>
            <person name="Strong C."/>
            <person name="Sun H."/>
            <person name="Lamar B."/>
            <person name="Yordan C."/>
            <person name="Ma P."/>
            <person name="Zhong J."/>
            <person name="Preston R."/>
            <person name="Vil D."/>
            <person name="Shekher M."/>
            <person name="Matero A."/>
            <person name="Shah R."/>
            <person name="Swaby I.K."/>
            <person name="O'Shaughnessy A."/>
            <person name="Rodriguez M."/>
            <person name="Hoffman J."/>
            <person name="Till S."/>
            <person name="Granat S."/>
            <person name="Shohdy N."/>
            <person name="Hasegawa A."/>
            <person name="Hameed A."/>
            <person name="Lodhi M."/>
            <person name="Johnson A."/>
            <person name="Chen E."/>
            <person name="Marra M.A."/>
            <person name="Martienssen R."/>
            <person name="McCombie W.R."/>
        </authorList>
    </citation>
    <scope>NUCLEOTIDE SEQUENCE [LARGE SCALE GENOMIC DNA]</scope>
    <source>
        <strain>cv. Columbia</strain>
    </source>
</reference>
<reference key="3">
    <citation type="journal article" date="2017" name="Plant J.">
        <title>Araport11: a complete reannotation of the Arabidopsis thaliana reference genome.</title>
        <authorList>
            <person name="Cheng C.Y."/>
            <person name="Krishnakumar V."/>
            <person name="Chan A.P."/>
            <person name="Thibaud-Nissen F."/>
            <person name="Schobel S."/>
            <person name="Town C.D."/>
        </authorList>
    </citation>
    <scope>GENOME REANNOTATION</scope>
    <source>
        <strain>cv. Columbia</strain>
    </source>
</reference>
<reference key="4">
    <citation type="journal article" date="2003" name="Science">
        <title>Empirical analysis of transcriptional activity in the Arabidopsis genome.</title>
        <authorList>
            <person name="Yamada K."/>
            <person name="Lim J."/>
            <person name="Dale J.M."/>
            <person name="Chen H."/>
            <person name="Shinn P."/>
            <person name="Palm C.J."/>
            <person name="Southwick A.M."/>
            <person name="Wu H.C."/>
            <person name="Kim C.J."/>
            <person name="Nguyen M."/>
            <person name="Pham P.K."/>
            <person name="Cheuk R.F."/>
            <person name="Karlin-Newmann G."/>
            <person name="Liu S.X."/>
            <person name="Lam B."/>
            <person name="Sakano H."/>
            <person name="Wu T."/>
            <person name="Yu G."/>
            <person name="Miranda M."/>
            <person name="Quach H.L."/>
            <person name="Tripp M."/>
            <person name="Chang C.H."/>
            <person name="Lee J.M."/>
            <person name="Toriumi M.J."/>
            <person name="Chan M.M."/>
            <person name="Tang C.C."/>
            <person name="Onodera C.S."/>
            <person name="Deng J.M."/>
            <person name="Akiyama K."/>
            <person name="Ansari Y."/>
            <person name="Arakawa T."/>
            <person name="Banh J."/>
            <person name="Banno F."/>
            <person name="Bowser L."/>
            <person name="Brooks S.Y."/>
            <person name="Carninci P."/>
            <person name="Chao Q."/>
            <person name="Choy N."/>
            <person name="Enju A."/>
            <person name="Goldsmith A.D."/>
            <person name="Gurjal M."/>
            <person name="Hansen N.F."/>
            <person name="Hayashizaki Y."/>
            <person name="Johnson-Hopson C."/>
            <person name="Hsuan V.W."/>
            <person name="Iida K."/>
            <person name="Karnes M."/>
            <person name="Khan S."/>
            <person name="Koesema E."/>
            <person name="Ishida J."/>
            <person name="Jiang P.X."/>
            <person name="Jones T."/>
            <person name="Kawai J."/>
            <person name="Kamiya A."/>
            <person name="Meyers C."/>
            <person name="Nakajima M."/>
            <person name="Narusaka M."/>
            <person name="Seki M."/>
            <person name="Sakurai T."/>
            <person name="Satou M."/>
            <person name="Tamse R."/>
            <person name="Vaysberg M."/>
            <person name="Wallender E.K."/>
            <person name="Wong C."/>
            <person name="Yamamura Y."/>
            <person name="Yuan S."/>
            <person name="Shinozaki K."/>
            <person name="Davis R.W."/>
            <person name="Theologis A."/>
            <person name="Ecker J.R."/>
        </authorList>
    </citation>
    <scope>NUCLEOTIDE SEQUENCE [LARGE SCALE MRNA]</scope>
    <source>
        <strain>cv. Columbia</strain>
    </source>
</reference>
<reference key="5">
    <citation type="submission" date="2002-03" db="EMBL/GenBank/DDBJ databases">
        <title>Full-length cDNA from Arabidopsis thaliana.</title>
        <authorList>
            <person name="Brover V.V."/>
            <person name="Troukhan M.E."/>
            <person name="Alexandrov N.A."/>
            <person name="Lu Y.-P."/>
            <person name="Flavell R.B."/>
            <person name="Feldmann K.A."/>
        </authorList>
    </citation>
    <scope>NUCLEOTIDE SEQUENCE [LARGE SCALE MRNA]</scope>
</reference>
<reference key="6">
    <citation type="journal article" date="1999" name="Trends Plant Sci.">
        <title>A guide to the Lhc genes and their relatives in Arabidopsis.</title>
        <authorList>
            <person name="Jansson S."/>
        </authorList>
    </citation>
    <scope>NUCLEOTIDE SEQUENCE [MRNA] OF 4-193</scope>
</reference>
<reference key="7">
    <citation type="submission" date="1993-09" db="EMBL/GenBank/DDBJ databases">
        <title>The Arabidopsis thaliana transcribed genome: the GDR cDNA program.</title>
        <authorList>
            <person name="Raynal M."/>
            <person name="Grellet F."/>
            <person name="Laudie M."/>
            <person name="Meyer Y."/>
            <person name="Cooke R."/>
            <person name="Delseny M."/>
        </authorList>
    </citation>
    <scope>NUCLEOTIDE SEQUENCE [LARGE SCALE MRNA] OF 115-193</scope>
    <source>
        <strain>cv. Columbia</strain>
        <tissue>Seedling</tissue>
    </source>
</reference>
<reference key="8">
    <citation type="journal article" date="2000" name="Proc. Natl. Acad. Sci. U.S.A.">
        <title>Light stress-regulated two-helix proteins in Arabidopsis thaliana related to the chlorophyll a/b-binding gene family.</title>
        <authorList>
            <person name="Heddad M."/>
            <person name="Adamska I."/>
        </authorList>
    </citation>
    <scope>SUBCELLULAR LOCATION</scope>
    <scope>INDUCTION BY LIGHT</scope>
    <source>
        <strain>cv. Columbia</strain>
    </source>
</reference>
<reference key="9">
    <citation type="journal article" date="2001" name="Genes Cells">
        <title>Arabidopsis transcriptional regulation by light stress via hydrogen peroxide-dependent and -independent pathways.</title>
        <authorList>
            <person name="Kimura M."/>
            <person name="Yoshizumi T."/>
            <person name="Manabe K."/>
            <person name="Yamamoto Y.Y."/>
            <person name="Matsui M."/>
        </authorList>
    </citation>
    <scope>INDUCTION BY LIGHT</scope>
</reference>
<reference key="10">
    <citation type="journal article" date="2001" name="Plant Physiol.">
        <title>Dissection of the light signal transduction pathways regulating the two early light-induced protein genes in Arabidopsis.</title>
        <authorList>
            <person name="Harari-Steinberg O."/>
            <person name="Ohad I."/>
            <person name="Chamovitz D.A."/>
        </authorList>
    </citation>
    <scope>INDUCTION BY LIGHT</scope>
</reference>
<reference key="11">
    <citation type="journal article" date="2003" name="Proc. Natl. Acad. Sci. U.S.A.">
        <title>Early light-induced proteins protect Arabidopsis from photooxidative stress.</title>
        <authorList>
            <person name="Hutin C."/>
            <person name="Nussaume L."/>
            <person name="Moise N."/>
            <person name="Moya I."/>
            <person name="Kloppstech K."/>
            <person name="Havaux M."/>
        </authorList>
    </citation>
    <scope>FUNCTION IN PHOTOPROTECTION</scope>
    <scope>INDUCTION BY LIGHT</scope>
    <source>
        <strain>cv. Columbia</strain>
    </source>
</reference>
<reference key="12">
    <citation type="journal article" date="2005" name="Plant Mol. Biol.">
        <title>Mutational and expression analysis of ELIP1 and ELIP2 in Arabidopsis thaliana.</title>
        <authorList>
            <person name="Casazza A.P."/>
            <person name="Rossini S."/>
            <person name="Rosso M.G."/>
            <person name="Soave C."/>
        </authorList>
    </citation>
    <scope>FUNCTION</scope>
    <scope>DISRUPTION PHENOTYPE</scope>
    <scope>DEVELOPMENTAL STAGE</scope>
    <scope>INDUCTION BY LIGHT</scope>
    <source>
        <strain>cv. Columbia</strain>
    </source>
</reference>
<reference key="13">
    <citation type="journal article" date="2006" name="Plant Physiol.">
        <title>Suppression of both ELIP1 and ELIP2 in Arabidopsis does not affect tolerance to photoinhibition and photooxidative stress.</title>
        <authorList>
            <person name="Rossini S."/>
            <person name="Casazza A.P."/>
            <person name="Engelmann E.C."/>
            <person name="Havaux M."/>
            <person name="Jennings R.C."/>
            <person name="Soave C."/>
        </authorList>
    </citation>
    <scope>FUNCTION</scope>
    <scope>DISRUPTION PHENOTYPE</scope>
</reference>
<reference key="14">
    <citation type="journal article" date="2006" name="Plant Physiol.">
        <title>Differential expression and localization of early light-induced proteins in Arabidopsis.</title>
        <authorList>
            <person name="Heddad M."/>
            <person name="Noren H."/>
            <person name="Reiser V."/>
            <person name="Dunaeva M."/>
            <person name="Andersson B."/>
            <person name="Adamska I."/>
        </authorList>
    </citation>
    <scope>INDUCTION BY LIGHT</scope>
    <scope>SUBCELLULAR LOCATION</scope>
</reference>
<reference key="15">
    <citation type="journal article" date="2007" name="Plant J.">
        <title>The light stress-induced protein ELIP2 is a regulator of chlorophyll synthesis in Arabidopsis thaliana.</title>
        <authorList>
            <person name="Tzvetkova-Chevolleau T."/>
            <person name="Franck F."/>
            <person name="Alawady A.E."/>
            <person name="Dall'Osto L."/>
            <person name="Carriere F."/>
            <person name="Bassi R."/>
            <person name="Grimm B."/>
            <person name="Nussaume L."/>
            <person name="Havaux M."/>
        </authorList>
    </citation>
    <scope>FUNCTION</scope>
    <source>
        <strain>cv. Columbia</strain>
    </source>
</reference>
<reference key="16">
    <citation type="journal article" date="2011" name="New Phytol.">
        <title>Inactivation of the ELIP1 and ELIP2 genes affects Arabidopsis seed germination.</title>
        <authorList>
            <person name="Rizza A."/>
            <person name="Boccaccini A."/>
            <person name="Lopez-Vidriero I."/>
            <person name="Costantino P."/>
            <person name="Vittorioso P."/>
        </authorList>
    </citation>
    <scope>FUNCTION</scope>
    <scope>DISRUPTION PHENOTYPE</scope>
    <source>
        <strain>cv. Columbia</strain>
    </source>
</reference>
<reference key="17">
    <citation type="journal article" date="2019" name="Plant Cell">
        <title>ORANGE represses chloroplast biogenesis in etiolated Arabidopsis cotyledons via interaction with TCP14.</title>
        <authorList>
            <person name="Sun T."/>
            <person name="Zhou F."/>
            <person name="Huang X.-Q."/>
            <person name="Chen W.-C."/>
            <person name="Kong M.-J."/>
            <person name="Zhou C.-F."/>
            <person name="Zhuang Z."/>
            <person name="Li L."/>
            <person name="Lu S."/>
        </authorList>
    </citation>
    <scope>INDUCTION BY LIGHT</scope>
    <source>
        <strain>cv. Columbia</strain>
    </source>
</reference>
<keyword id="KW-0150">Chloroplast</keyword>
<keyword id="KW-0472">Membrane</keyword>
<keyword id="KW-0602">Photosynthesis</keyword>
<keyword id="KW-0603">Photosystem I</keyword>
<keyword id="KW-0604">Photosystem II</keyword>
<keyword id="KW-0934">Plastid</keyword>
<keyword id="KW-1185">Reference proteome</keyword>
<keyword id="KW-0793">Thylakoid</keyword>
<keyword id="KW-0809">Transit peptide</keyword>
<keyword id="KW-0812">Transmembrane</keyword>
<keyword id="KW-1133">Transmembrane helix</keyword>